<feature type="chain" id="PRO_0000288313" description="Proline--tRNA ligase">
    <location>
        <begin position="1"/>
        <end position="605"/>
    </location>
</feature>
<reference key="1">
    <citation type="submission" date="2006-12" db="EMBL/GenBank/DDBJ databases">
        <title>Bifidobacterium adolescentis complete genome sequence.</title>
        <authorList>
            <person name="Suzuki T."/>
            <person name="Tsuda Y."/>
            <person name="Kanou N."/>
            <person name="Inoue T."/>
            <person name="Kumazaki K."/>
            <person name="Nagano S."/>
            <person name="Hirai S."/>
            <person name="Tanaka K."/>
            <person name="Watanabe K."/>
        </authorList>
    </citation>
    <scope>NUCLEOTIDE SEQUENCE [LARGE SCALE GENOMIC DNA]</scope>
    <source>
        <strain>ATCC 15703 / DSM 20083 / NCTC 11814 / E194a</strain>
    </source>
</reference>
<sequence>MSTMFLRTLREDPADADVVSDKLLQRACYLRKAAPGIWTWLPLGLNVLNKIENIIREEMASIDAQEVHFSGLLPREPYEATHRWEEYGDNIFRLKDRHEADYLLAPTHEEMFTLLVKDLYSSYKDLPVTLYQIQTKYRDEFRPRAGLIRGREFIMKDAYSFTLDKEGLVKAYMDERGAYERIFNRLDLKYVPVHAMAGPMGGFESEEFLAPMEIGEDTFAQSPSGKAWNVEALTTPEPEAIDFTATPAAEKRPTPDAATIDKMVEFANANHPRSDGRDWQASDILKNVVIAVMHPQDEDHDEPWRELVVVGVPGDRTVDMKRLEAQFTPAEIEEATDEDLKKHPELVKGYIGPMALGPQARDGKKAENASETGDALRYLIDAHVARGSAWFTGADEQDVDYYDLVYGRDFEADGTVEAVQVRHGDMSPDGSGPLSFERGVEIGQVFQLGLKYSNALGLKVLDQNGKTVPVWMGSYGIGVSRVMACIAETHHDEKGLAWPAVIAPAQVHVVATGKDAAAFEAAEQLIGELEAKGIEVIFDDRKKVSPGVKFKDAELIGVPIIAVAGRDTVNNGTIEVRDRNGENAEAVPVADAAQAIADRVAALLK</sequence>
<protein>
    <recommendedName>
        <fullName evidence="1">Proline--tRNA ligase</fullName>
        <ecNumber evidence="1">6.1.1.15</ecNumber>
    </recommendedName>
    <alternativeName>
        <fullName evidence="1">Prolyl-tRNA synthetase</fullName>
        <shortName evidence="1">ProRS</shortName>
    </alternativeName>
</protein>
<accession>A1A0K4</accession>
<dbReference type="EC" id="6.1.1.15" evidence="1"/>
<dbReference type="EMBL" id="AP009256">
    <property type="protein sequence ID" value="BAF39237.1"/>
    <property type="molecule type" value="Genomic_DNA"/>
</dbReference>
<dbReference type="SMR" id="A1A0K4"/>
<dbReference type="STRING" id="367928.BAD_0456"/>
<dbReference type="PaxDb" id="1680-BADO_0472"/>
<dbReference type="KEGG" id="bad:BAD_0456"/>
<dbReference type="HOGENOM" id="CLU_016739_0_0_11"/>
<dbReference type="Proteomes" id="UP000008702">
    <property type="component" value="Chromosome"/>
</dbReference>
<dbReference type="GO" id="GO:0005829">
    <property type="term" value="C:cytosol"/>
    <property type="evidence" value="ECO:0007669"/>
    <property type="project" value="TreeGrafter"/>
</dbReference>
<dbReference type="GO" id="GO:0002161">
    <property type="term" value="F:aminoacyl-tRNA deacylase activity"/>
    <property type="evidence" value="ECO:0007669"/>
    <property type="project" value="InterPro"/>
</dbReference>
<dbReference type="GO" id="GO:0005524">
    <property type="term" value="F:ATP binding"/>
    <property type="evidence" value="ECO:0007669"/>
    <property type="project" value="UniProtKB-UniRule"/>
</dbReference>
<dbReference type="GO" id="GO:0004827">
    <property type="term" value="F:proline-tRNA ligase activity"/>
    <property type="evidence" value="ECO:0007669"/>
    <property type="project" value="UniProtKB-UniRule"/>
</dbReference>
<dbReference type="GO" id="GO:0006433">
    <property type="term" value="P:prolyl-tRNA aminoacylation"/>
    <property type="evidence" value="ECO:0007669"/>
    <property type="project" value="UniProtKB-UniRule"/>
</dbReference>
<dbReference type="CDD" id="cd00861">
    <property type="entry name" value="ProRS_anticodon_short"/>
    <property type="match status" value="1"/>
</dbReference>
<dbReference type="Gene3D" id="3.40.50.800">
    <property type="entry name" value="Anticodon-binding domain"/>
    <property type="match status" value="1"/>
</dbReference>
<dbReference type="Gene3D" id="3.30.930.10">
    <property type="entry name" value="Bira Bifunctional Protein, Domain 2"/>
    <property type="match status" value="2"/>
</dbReference>
<dbReference type="Gene3D" id="3.90.960.10">
    <property type="entry name" value="YbaK/aminoacyl-tRNA synthetase-associated domain"/>
    <property type="match status" value="1"/>
</dbReference>
<dbReference type="HAMAP" id="MF_01569">
    <property type="entry name" value="Pro_tRNA_synth_type1"/>
    <property type="match status" value="1"/>
</dbReference>
<dbReference type="InterPro" id="IPR002314">
    <property type="entry name" value="aa-tRNA-synt_IIb"/>
</dbReference>
<dbReference type="InterPro" id="IPR006195">
    <property type="entry name" value="aa-tRNA-synth_II"/>
</dbReference>
<dbReference type="InterPro" id="IPR045864">
    <property type="entry name" value="aa-tRNA-synth_II/BPL/LPL"/>
</dbReference>
<dbReference type="InterPro" id="IPR004154">
    <property type="entry name" value="Anticodon-bd"/>
</dbReference>
<dbReference type="InterPro" id="IPR036621">
    <property type="entry name" value="Anticodon-bd_dom_sf"/>
</dbReference>
<dbReference type="InterPro" id="IPR002316">
    <property type="entry name" value="Pro-tRNA-ligase_IIa"/>
</dbReference>
<dbReference type="InterPro" id="IPR004500">
    <property type="entry name" value="Pro-tRNA-synth_IIa_bac-type"/>
</dbReference>
<dbReference type="InterPro" id="IPR023717">
    <property type="entry name" value="Pro-tRNA-Synthase_IIa_type1"/>
</dbReference>
<dbReference type="InterPro" id="IPR050062">
    <property type="entry name" value="Pro-tRNA_synthetase"/>
</dbReference>
<dbReference type="InterPro" id="IPR044140">
    <property type="entry name" value="ProRS_anticodon_short"/>
</dbReference>
<dbReference type="InterPro" id="IPR036754">
    <property type="entry name" value="YbaK/aa-tRNA-synt-asso_dom_sf"/>
</dbReference>
<dbReference type="InterPro" id="IPR007214">
    <property type="entry name" value="YbaK/aa-tRNA-synth-assoc-dom"/>
</dbReference>
<dbReference type="NCBIfam" id="NF006625">
    <property type="entry name" value="PRK09194.1"/>
    <property type="match status" value="1"/>
</dbReference>
<dbReference type="NCBIfam" id="TIGR00409">
    <property type="entry name" value="proS_fam_II"/>
    <property type="match status" value="1"/>
</dbReference>
<dbReference type="PANTHER" id="PTHR42753">
    <property type="entry name" value="MITOCHONDRIAL RIBOSOME PROTEIN L39/PROLYL-TRNA LIGASE FAMILY MEMBER"/>
    <property type="match status" value="1"/>
</dbReference>
<dbReference type="PANTHER" id="PTHR42753:SF2">
    <property type="entry name" value="PROLINE--TRNA LIGASE"/>
    <property type="match status" value="1"/>
</dbReference>
<dbReference type="Pfam" id="PF03129">
    <property type="entry name" value="HGTP_anticodon"/>
    <property type="match status" value="1"/>
</dbReference>
<dbReference type="Pfam" id="PF00587">
    <property type="entry name" value="tRNA-synt_2b"/>
    <property type="match status" value="1"/>
</dbReference>
<dbReference type="Pfam" id="PF04073">
    <property type="entry name" value="tRNA_edit"/>
    <property type="match status" value="1"/>
</dbReference>
<dbReference type="PRINTS" id="PR01046">
    <property type="entry name" value="TRNASYNTHPRO"/>
</dbReference>
<dbReference type="SUPFAM" id="SSF52954">
    <property type="entry name" value="Class II aaRS ABD-related"/>
    <property type="match status" value="1"/>
</dbReference>
<dbReference type="SUPFAM" id="SSF55681">
    <property type="entry name" value="Class II aaRS and biotin synthetases"/>
    <property type="match status" value="1"/>
</dbReference>
<dbReference type="SUPFAM" id="SSF55826">
    <property type="entry name" value="YbaK/ProRS associated domain"/>
    <property type="match status" value="1"/>
</dbReference>
<dbReference type="PROSITE" id="PS50862">
    <property type="entry name" value="AA_TRNA_LIGASE_II"/>
    <property type="match status" value="1"/>
</dbReference>
<evidence type="ECO:0000255" key="1">
    <source>
        <dbReference type="HAMAP-Rule" id="MF_01569"/>
    </source>
</evidence>
<name>SYP_BIFAA</name>
<comment type="function">
    <text evidence="1">Catalyzes the attachment of proline to tRNA(Pro) in a two-step reaction: proline is first activated by ATP to form Pro-AMP and then transferred to the acceptor end of tRNA(Pro). As ProRS can inadvertently accommodate and process non-cognate amino acids such as alanine and cysteine, to avoid such errors it has two additional distinct editing activities against alanine. One activity is designated as 'pretransfer' editing and involves the tRNA(Pro)-independent hydrolysis of activated Ala-AMP. The other activity is designated 'posttransfer' editing and involves deacylation of mischarged Ala-tRNA(Pro). The misacylated Cys-tRNA(Pro) is not edited by ProRS.</text>
</comment>
<comment type="catalytic activity">
    <reaction evidence="1">
        <text>tRNA(Pro) + L-proline + ATP = L-prolyl-tRNA(Pro) + AMP + diphosphate</text>
        <dbReference type="Rhea" id="RHEA:14305"/>
        <dbReference type="Rhea" id="RHEA-COMP:9700"/>
        <dbReference type="Rhea" id="RHEA-COMP:9702"/>
        <dbReference type="ChEBI" id="CHEBI:30616"/>
        <dbReference type="ChEBI" id="CHEBI:33019"/>
        <dbReference type="ChEBI" id="CHEBI:60039"/>
        <dbReference type="ChEBI" id="CHEBI:78442"/>
        <dbReference type="ChEBI" id="CHEBI:78532"/>
        <dbReference type="ChEBI" id="CHEBI:456215"/>
        <dbReference type="EC" id="6.1.1.15"/>
    </reaction>
</comment>
<comment type="subunit">
    <text evidence="1">Homodimer.</text>
</comment>
<comment type="subcellular location">
    <subcellularLocation>
        <location evidence="1">Cytoplasm</location>
    </subcellularLocation>
</comment>
<comment type="domain">
    <text evidence="1">Consists of three domains: the N-terminal catalytic domain, the editing domain and the C-terminal anticodon-binding domain.</text>
</comment>
<comment type="similarity">
    <text evidence="1">Belongs to the class-II aminoacyl-tRNA synthetase family. ProS type 1 subfamily.</text>
</comment>
<keyword id="KW-0030">Aminoacyl-tRNA synthetase</keyword>
<keyword id="KW-0067">ATP-binding</keyword>
<keyword id="KW-0963">Cytoplasm</keyword>
<keyword id="KW-0436">Ligase</keyword>
<keyword id="KW-0547">Nucleotide-binding</keyword>
<keyword id="KW-0648">Protein biosynthesis</keyword>
<keyword id="KW-1185">Reference proteome</keyword>
<gene>
    <name evidence="1" type="primary">proS</name>
    <name type="ordered locus">BAD_0456</name>
</gene>
<proteinExistence type="inferred from homology"/>
<organism>
    <name type="scientific">Bifidobacterium adolescentis (strain ATCC 15703 / DSM 20083 / NCTC 11814 / E194a)</name>
    <dbReference type="NCBI Taxonomy" id="367928"/>
    <lineage>
        <taxon>Bacteria</taxon>
        <taxon>Bacillati</taxon>
        <taxon>Actinomycetota</taxon>
        <taxon>Actinomycetes</taxon>
        <taxon>Bifidobacteriales</taxon>
        <taxon>Bifidobacteriaceae</taxon>
        <taxon>Bifidobacterium</taxon>
    </lineage>
</organism>